<reference key="1">
    <citation type="journal article" date="1989" name="Virology">
        <title>The 5' region of Tacaribe virus L RNA encodes a protein with a potential metal binding domain.</title>
        <authorList>
            <person name="Iapalucci S."/>
            <person name="Lopez N."/>
            <person name="Rey O."/>
            <person name="Zakin M.M."/>
            <person name="Cohen G.N."/>
            <person name="Franze-Fernandez M.T."/>
        </authorList>
    </citation>
    <scope>NUCLEOTIDE SEQUENCE [GENOMIC RNA]</scope>
</reference>
<reference key="2">
    <citation type="journal article" date="2003" name="J. Virol.">
        <title>Tacaribe virus Z protein interacts with the L polymerase protein to inhibit viral RNA synthesis.</title>
        <authorList>
            <person name="Jacamo R."/>
            <person name="Lopez N."/>
            <person name="Wilda M."/>
            <person name="Franze-Fernandez M.T."/>
        </authorList>
    </citation>
    <scope>INTERACTION WITH PROTEIN L</scope>
    <scope>FUNCTION</scope>
</reference>
<gene>
    <name evidence="2" type="primary">Z</name>
</gene>
<evidence type="ECO:0000250" key="1">
    <source>
        <dbReference type="UniProtKB" id="P18541"/>
    </source>
</evidence>
<evidence type="ECO:0000255" key="2">
    <source>
        <dbReference type="HAMAP-Rule" id="MF_04087"/>
    </source>
</evidence>
<evidence type="ECO:0000256" key="3">
    <source>
        <dbReference type="SAM" id="MobiDB-lite"/>
    </source>
</evidence>
<evidence type="ECO:0000269" key="4">
    <source>
    </source>
</evidence>
<keyword id="KW-1032">Host cell membrane</keyword>
<keyword id="KW-1035">Host cytoplasm</keyword>
<keyword id="KW-1043">Host membrane</keyword>
<keyword id="KW-0945">Host-virus interaction</keyword>
<keyword id="KW-0449">Lipoprotein</keyword>
<keyword id="KW-0472">Membrane</keyword>
<keyword id="KW-0479">Metal-binding</keyword>
<keyword id="KW-0519">Myristate</keyword>
<keyword id="KW-1185">Reference proteome</keyword>
<keyword id="KW-1198">Viral budding</keyword>
<keyword id="KW-1187">Viral budding via the host ESCRT complexes</keyword>
<keyword id="KW-1188">Viral release from host cell</keyword>
<keyword id="KW-0946">Virion</keyword>
<keyword id="KW-0862">Zinc</keyword>
<keyword id="KW-0863">Zinc-finger</keyword>
<dbReference type="EMBL" id="J04340">
    <property type="protein sequence ID" value="AAA47900.1"/>
    <property type="molecule type" value="Genomic_RNA"/>
</dbReference>
<dbReference type="PIR" id="A46313">
    <property type="entry name" value="A46313"/>
</dbReference>
<dbReference type="KEGG" id="vg:956594"/>
<dbReference type="Proteomes" id="UP000008026">
    <property type="component" value="Genome"/>
</dbReference>
<dbReference type="GO" id="GO:0044220">
    <property type="term" value="C:host cell perinuclear region of cytoplasm"/>
    <property type="evidence" value="ECO:0007669"/>
    <property type="project" value="UniProtKB-SubCell"/>
</dbReference>
<dbReference type="GO" id="GO:0020002">
    <property type="term" value="C:host cell plasma membrane"/>
    <property type="evidence" value="ECO:0007669"/>
    <property type="project" value="UniProtKB-SubCell"/>
</dbReference>
<dbReference type="GO" id="GO:0016020">
    <property type="term" value="C:membrane"/>
    <property type="evidence" value="ECO:0007669"/>
    <property type="project" value="UniProtKB-UniRule"/>
</dbReference>
<dbReference type="GO" id="GO:0044423">
    <property type="term" value="C:virion component"/>
    <property type="evidence" value="ECO:0007669"/>
    <property type="project" value="UniProtKB-UniRule"/>
</dbReference>
<dbReference type="GO" id="GO:0003723">
    <property type="term" value="F:RNA binding"/>
    <property type="evidence" value="ECO:0007669"/>
    <property type="project" value="UniProtKB-UniRule"/>
</dbReference>
<dbReference type="GO" id="GO:0008270">
    <property type="term" value="F:zinc ion binding"/>
    <property type="evidence" value="ECO:0007669"/>
    <property type="project" value="UniProtKB-UniRule"/>
</dbReference>
<dbReference type="GO" id="GO:0046761">
    <property type="term" value="P:viral budding from plasma membrane"/>
    <property type="evidence" value="ECO:0007669"/>
    <property type="project" value="UniProtKB-UniRule"/>
</dbReference>
<dbReference type="GO" id="GO:0039702">
    <property type="term" value="P:viral budding via host ESCRT complex"/>
    <property type="evidence" value="ECO:0007669"/>
    <property type="project" value="UniProtKB-UniRule"/>
</dbReference>
<dbReference type="Gene3D" id="3.30.160.310">
    <property type="match status" value="1"/>
</dbReference>
<dbReference type="HAMAP" id="MF_04087">
    <property type="entry name" value="ARENA_Z"/>
    <property type="match status" value="1"/>
</dbReference>
<dbReference type="InterPro" id="IPR024183">
    <property type="entry name" value="RING_finger_Z_arenaviridae"/>
</dbReference>
<dbReference type="InterPro" id="IPR038485">
    <property type="entry name" value="Z_RING-type_Znf_sf"/>
</dbReference>
<dbReference type="InterPro" id="IPR003224">
    <property type="entry name" value="Z_RING_Znf"/>
</dbReference>
<dbReference type="Pfam" id="PF03854">
    <property type="entry name" value="zf-P11"/>
    <property type="match status" value="1"/>
</dbReference>
<dbReference type="PIRSF" id="PIRSF004030">
    <property type="entry name" value="Z_ArenaV"/>
    <property type="match status" value="1"/>
</dbReference>
<accession>Q88470</accession>
<organism>
    <name type="scientific">Tacaribe virus (strain Franze-Fernandez)</name>
    <name type="common">TCRV</name>
    <dbReference type="NCBI Taxonomy" id="928313"/>
    <lineage>
        <taxon>Viruses</taxon>
        <taxon>Riboviria</taxon>
        <taxon>Orthornavirae</taxon>
        <taxon>Negarnaviricota</taxon>
        <taxon>Polyploviricotina</taxon>
        <taxon>Ellioviricetes</taxon>
        <taxon>Bunyavirales</taxon>
        <taxon>Arenaviridae</taxon>
        <taxon>Mammarenavirus</taxon>
        <taxon>Tacaribe virus</taxon>
    </lineage>
</organism>
<name>Z_TACVF</name>
<proteinExistence type="evidence at protein level"/>
<protein>
    <recommendedName>
        <fullName evidence="2">RING finger protein Z</fullName>
        <shortName evidence="2">Protein Z</shortName>
    </recommendedName>
    <alternativeName>
        <fullName evidence="2">Zinc-binding protein</fullName>
    </alternativeName>
</protein>
<sequence length="95" mass="10850">MGNCNRTQKPSSSSNNLEKPPQAAEFRRTAEPSLYGRYNCKCCWFADKNLITCSDHYLCLRCHQIMLRNSELCNICWKPLPTSIRVPLEASAPDL</sequence>
<feature type="initiator methionine" description="Removed; by host" evidence="2">
    <location>
        <position position="1"/>
    </location>
</feature>
<feature type="chain" id="PRO_0000079205" description="RING finger protein Z" evidence="2">
    <location>
        <begin position="2"/>
        <end position="95"/>
    </location>
</feature>
<feature type="zinc finger region" description="RING-type; atypical" evidence="2">
    <location>
        <begin position="40"/>
        <end position="76"/>
    </location>
</feature>
<feature type="region of interest" description="Disordered" evidence="3">
    <location>
        <begin position="1"/>
        <end position="25"/>
    </location>
</feature>
<feature type="short sequence motif" description="ASAP motif">
    <location>
        <begin position="90"/>
        <end position="93"/>
    </location>
</feature>
<feature type="compositionally biased region" description="Polar residues" evidence="3">
    <location>
        <begin position="1"/>
        <end position="17"/>
    </location>
</feature>
<feature type="lipid moiety-binding region" description="N-myristoyl glycine; by host" evidence="2">
    <location>
        <position position="2"/>
    </location>
</feature>
<organismHost>
    <name type="scientific">Artibeus</name>
    <name type="common">neotropical fruit bats</name>
    <dbReference type="NCBI Taxonomy" id="9416"/>
</organismHost>
<comment type="function">
    <text evidence="1 2 4">Plays a crucial role in virion assembly and budding. Expressed late in the virus life cycle, it acts as an inhibitor of viral transcription and RNA synthesis by interacting with the viral polymerase L. Presumably recruits the NP encapsidated genome to cellular membranes at budding sites via direct interaction with NP. Plays critical roles in the final steps of viral release by interacting with host TSG101, a member of the vacuolar protein-sorting pathway and using other cellular host proteins involved in vesicle formation pathway. The budding of the virus progeny occurs after association of protein Z with the viral glycoprotein complex SSP-GP1-GP2 at the cell periphery, step that requires myristoylation of protein Z. Also selectively represses protein production by associating with host eIF4E (By similarity) (PubMed:12970423). In cell-based minigenome assay, has an inhibitory effect on the ribonucleoprotein machinery (vRNP), which is responsible for the replication and transcription of the viral genome (By similarity).</text>
</comment>
<comment type="subunit">
    <text evidence="2 4">Interacts with protein NP; this interaction probably directs the encapsidated genome to budding sites. Interacts (via RING domain) with polymerase L; this interaction inhibits viral transcription and replication, Z partially blocks the product exit tunnel for the releasing nascent RNA product. Interacts with the glycoprotein complex; this interaction plays a role in virion budding. Interacts with host eIF4E; this interaction results in eIF4E reduced affinity for its substrate, the 5'-m7 G cap structure. Interacts (via late-budding domain) with host TSG101; this interaction is essential for budding and release of viral particles. Interacts with host RPLP0; this interaction may serve to load ribosome-like particles inside the virion. Interacts with host PML; this interaction induces PML bodies redistribution in the cytoplasm upon viral infection.</text>
</comment>
<comment type="subcellular location">
    <subcellularLocation>
        <location evidence="2">Virion</location>
    </subcellularLocation>
    <subcellularLocation>
        <location evidence="2">Host cytoplasm</location>
        <location evidence="2">Host perinuclear region</location>
    </subcellularLocation>
    <subcellularLocation>
        <location evidence="2">Host cell membrane</location>
        <topology evidence="2">Lipid-anchor</topology>
        <orientation evidence="2">Cytoplasmic side</orientation>
    </subcellularLocation>
    <text evidence="2">Mainly perinuclear. During budding, associates at the inner side of the plasma membrane of infected cells.</text>
</comment>
<comment type="domain">
    <text evidence="2">Late-budding domains (L domains) are short sequence motifs essential for viral particle budding. They recruit proteins of the host ESCRT machinery (Endosomal Sorting Complex Required for Transport) or ESCRT-associated proteins.</text>
</comment>
<comment type="PTM">
    <text evidence="1">Myristoylation is required for the role of RING finger protein Z in assembly and budding (By similarity).</text>
</comment>
<comment type="miscellaneous">
    <text evidence="1">Inhibition of host myristoylation by the compound DDD85646 leads to proteasomal degradation of protein Z (and not lysosomal), strong inhibition of Z-mediated assembly and budding, and reduced levels of viral replication and transcription.</text>
</comment>
<comment type="similarity">
    <text evidence="2">Belongs to the arenaviridae Z protein family.</text>
</comment>